<accession>Q9L6L9</accession>
<sequence>MTTLSCKVTSVEAITDTVYRVRLVPDAAFSFRAGQYLMVVMDERDKRPFSMASTPDEKGFIELHIGASELNLYAMAVMDRILKDREIVVDIPHGDAWLRDDEERPLILIAGGTGFSYVRSILLTALARNPARDVTIYWGGREEKHLYDLSELEALSVNHPNLRIEPVVEQPEEGWRGRTGTVLTAVLQDYGTLAGHDIYIAGRFEMAKIARDLFCHERNAREDRLFGDAFAFI</sequence>
<reference key="1">
    <citation type="journal article" date="2001" name="Nature">
        <title>Complete genome sequence of Salmonella enterica serovar Typhimurium LT2.</title>
        <authorList>
            <person name="McClelland M."/>
            <person name="Sanderson K.E."/>
            <person name="Spieth J."/>
            <person name="Clifton S.W."/>
            <person name="Latreille P."/>
            <person name="Courtney L."/>
            <person name="Porwollik S."/>
            <person name="Ali J."/>
            <person name="Dante M."/>
            <person name="Du F."/>
            <person name="Hou S."/>
            <person name="Layman D."/>
            <person name="Leonard S."/>
            <person name="Nguyen C."/>
            <person name="Scott K."/>
            <person name="Holmes A."/>
            <person name="Grewal N."/>
            <person name="Mulvaney E."/>
            <person name="Ryan E."/>
            <person name="Sun H."/>
            <person name="Florea L."/>
            <person name="Miller W."/>
            <person name="Stoneking T."/>
            <person name="Nhan M."/>
            <person name="Waterston R."/>
            <person name="Wilson R.K."/>
        </authorList>
    </citation>
    <scope>NUCLEOTIDE SEQUENCE [LARGE SCALE GENOMIC DNA]</scope>
    <source>
        <strain>LT2 / SGSC1412 / ATCC 700720</strain>
    </source>
</reference>
<reference key="2">
    <citation type="journal article" date="2000" name="J. Bacteriol.">
        <title>Reduction of Cob(III)alamin to Cob(II)alamin in Salmonella enterica serovar typhimurium LT2.</title>
        <authorList>
            <person name="Fonseca M.V."/>
            <person name="Escalante-Semerena J.C."/>
        </authorList>
    </citation>
    <scope>PROTEIN SEQUENCE OF 2-16</scope>
    <scope>FUNCTION</scope>
    <scope>CATALYTIC ACTIVITY</scope>
</reference>
<comment type="function">
    <text evidence="4">Catalyzes the reduction of soluble flavins by reduced pyridine nucleotides.</text>
</comment>
<comment type="catalytic activity">
    <reaction evidence="4">
        <text>reduced riboflavin + NADP(+) = riboflavin + NADPH + 2 H(+)</text>
        <dbReference type="Rhea" id="RHEA:19377"/>
        <dbReference type="ChEBI" id="CHEBI:15378"/>
        <dbReference type="ChEBI" id="CHEBI:17607"/>
        <dbReference type="ChEBI" id="CHEBI:57783"/>
        <dbReference type="ChEBI" id="CHEBI:57986"/>
        <dbReference type="ChEBI" id="CHEBI:58349"/>
        <dbReference type="EC" id="1.5.1.41"/>
    </reaction>
</comment>
<comment type="catalytic activity">
    <reaction evidence="4">
        <text>reduced riboflavin + NAD(+) = riboflavin + NADH + 2 H(+)</text>
        <dbReference type="Rhea" id="RHEA:31455"/>
        <dbReference type="ChEBI" id="CHEBI:15378"/>
        <dbReference type="ChEBI" id="CHEBI:17607"/>
        <dbReference type="ChEBI" id="CHEBI:57540"/>
        <dbReference type="ChEBI" id="CHEBI:57945"/>
        <dbReference type="ChEBI" id="CHEBI:57986"/>
        <dbReference type="EC" id="1.5.1.41"/>
    </reaction>
</comment>
<comment type="subunit">
    <text evidence="2">Monomer.</text>
</comment>
<comment type="similarity">
    <text evidence="5">Belongs to the Fre/LuxG FAD/NAD(P) flavoprotein oxidoreductase family.</text>
</comment>
<protein>
    <recommendedName>
        <fullName>NAD(P)H-flavin reductase</fullName>
        <ecNumber evidence="4">1.5.1.41</ecNumber>
    </recommendedName>
    <alternativeName>
        <fullName>FMN reductase</fullName>
    </alternativeName>
    <alternativeName>
        <fullName>Ferrisiderophore reductase C</fullName>
    </alternativeName>
    <alternativeName>
        <fullName>NAD(P)H:flavin oxidoreductase</fullName>
    </alternativeName>
    <alternativeName>
        <fullName>Riboflavin reductase [NAD(P)H]</fullName>
    </alternativeName>
</protein>
<keyword id="KW-0903">Direct protein sequencing</keyword>
<keyword id="KW-0274">FAD</keyword>
<keyword id="KW-0285">Flavoprotein</keyword>
<keyword id="KW-0288">FMN</keyword>
<keyword id="KW-0406">Ion transport</keyword>
<keyword id="KW-0408">Iron</keyword>
<keyword id="KW-0410">Iron transport</keyword>
<keyword id="KW-0520">NAD</keyword>
<keyword id="KW-0521">NADP</keyword>
<keyword id="KW-0560">Oxidoreductase</keyword>
<keyword id="KW-1185">Reference proteome</keyword>
<keyword id="KW-0813">Transport</keyword>
<name>FRE_SALTY</name>
<proteinExistence type="evidence at protein level"/>
<gene>
    <name type="primary">fre</name>
    <name type="synonym">ubiB</name>
    <name type="ordered locus">STM3979</name>
    <name type="ORF">STMD1.10</name>
</gene>
<dbReference type="EC" id="1.5.1.41" evidence="4"/>
<dbReference type="EMBL" id="AF233324">
    <property type="protein sequence ID" value="AAF33411.1"/>
    <property type="molecule type" value="Genomic_DNA"/>
</dbReference>
<dbReference type="EMBL" id="AE006468">
    <property type="protein sequence ID" value="AAL22823.1"/>
    <property type="molecule type" value="Genomic_DNA"/>
</dbReference>
<dbReference type="RefSeq" id="NP_462864.1">
    <property type="nucleotide sequence ID" value="NC_003197.2"/>
</dbReference>
<dbReference type="RefSeq" id="WP_000209831.1">
    <property type="nucleotide sequence ID" value="NC_003197.2"/>
</dbReference>
<dbReference type="SMR" id="Q9L6L9"/>
<dbReference type="STRING" id="99287.STM3979"/>
<dbReference type="PaxDb" id="99287-STM3979"/>
<dbReference type="GeneID" id="1255505"/>
<dbReference type="KEGG" id="stm:STM3979"/>
<dbReference type="PATRIC" id="fig|99287.12.peg.4198"/>
<dbReference type="HOGENOM" id="CLU_003827_7_4_6"/>
<dbReference type="OMA" id="PCRHEGE"/>
<dbReference type="PhylomeDB" id="Q9L6L9"/>
<dbReference type="BioCyc" id="MetaCyc:MONOMER-13237"/>
<dbReference type="BioCyc" id="SENT99287:STM3979-MONOMER"/>
<dbReference type="Proteomes" id="UP000001014">
    <property type="component" value="Chromosome"/>
</dbReference>
<dbReference type="GO" id="GO:0042602">
    <property type="term" value="F:riboflavin reductase (NADPH) activity"/>
    <property type="evidence" value="ECO:0007669"/>
    <property type="project" value="RHEA"/>
</dbReference>
<dbReference type="GO" id="GO:0052875">
    <property type="term" value="F:riboflavin reductase [NAD(P)H] activity"/>
    <property type="evidence" value="ECO:0007669"/>
    <property type="project" value="UniProtKB-EC"/>
</dbReference>
<dbReference type="GO" id="GO:0006826">
    <property type="term" value="P:iron ion transport"/>
    <property type="evidence" value="ECO:0007669"/>
    <property type="project" value="UniProtKB-KW"/>
</dbReference>
<dbReference type="CDD" id="cd06189">
    <property type="entry name" value="flavin_oxioreductase"/>
    <property type="match status" value="1"/>
</dbReference>
<dbReference type="FunFam" id="3.40.50.80:FF:000016">
    <property type="entry name" value="NAD(P)H-flavin reductase"/>
    <property type="match status" value="1"/>
</dbReference>
<dbReference type="Gene3D" id="3.40.50.80">
    <property type="entry name" value="Nucleotide-binding domain of ferredoxin-NADP reductase (FNR) module"/>
    <property type="match status" value="1"/>
</dbReference>
<dbReference type="Gene3D" id="2.40.30.10">
    <property type="entry name" value="Translation factors"/>
    <property type="match status" value="1"/>
</dbReference>
<dbReference type="InterPro" id="IPR008333">
    <property type="entry name" value="Cbr1-like_FAD-bd_dom"/>
</dbReference>
<dbReference type="InterPro" id="IPR017927">
    <property type="entry name" value="FAD-bd_FR_type"/>
</dbReference>
<dbReference type="InterPro" id="IPR039261">
    <property type="entry name" value="FNR_nucleotide-bd"/>
</dbReference>
<dbReference type="InterPro" id="IPR001433">
    <property type="entry name" value="OxRdtase_FAD/NAD-bd"/>
</dbReference>
<dbReference type="InterPro" id="IPR017938">
    <property type="entry name" value="Riboflavin_synthase-like_b-brl"/>
</dbReference>
<dbReference type="NCBIfam" id="NF005963">
    <property type="entry name" value="PRK08051.1"/>
    <property type="match status" value="1"/>
</dbReference>
<dbReference type="PANTHER" id="PTHR43644">
    <property type="entry name" value="NA(+)-TRANSLOCATING NADH-QUINONE REDUCTASE SUBUNIT"/>
    <property type="match status" value="1"/>
</dbReference>
<dbReference type="PANTHER" id="PTHR43644:SF1">
    <property type="entry name" value="NAD(P)H-FLAVIN REDUCTASE"/>
    <property type="match status" value="1"/>
</dbReference>
<dbReference type="Pfam" id="PF00970">
    <property type="entry name" value="FAD_binding_6"/>
    <property type="match status" value="1"/>
</dbReference>
<dbReference type="Pfam" id="PF00175">
    <property type="entry name" value="NAD_binding_1"/>
    <property type="match status" value="1"/>
</dbReference>
<dbReference type="PRINTS" id="PR00410">
    <property type="entry name" value="PHEHYDRXLASE"/>
</dbReference>
<dbReference type="SUPFAM" id="SSF52343">
    <property type="entry name" value="Ferredoxin reductase-like, C-terminal NADP-linked domain"/>
    <property type="match status" value="1"/>
</dbReference>
<dbReference type="SUPFAM" id="SSF63380">
    <property type="entry name" value="Riboflavin synthase domain-like"/>
    <property type="match status" value="1"/>
</dbReference>
<dbReference type="PROSITE" id="PS51384">
    <property type="entry name" value="FAD_FR"/>
    <property type="match status" value="1"/>
</dbReference>
<evidence type="ECO:0000250" key="1"/>
<evidence type="ECO:0000250" key="2">
    <source>
        <dbReference type="UniProtKB" id="P0AEN1"/>
    </source>
</evidence>
<evidence type="ECO:0000255" key="3">
    <source>
        <dbReference type="PROSITE-ProRule" id="PRU00716"/>
    </source>
</evidence>
<evidence type="ECO:0000269" key="4">
    <source>
    </source>
</evidence>
<evidence type="ECO:0000305" key="5"/>
<organism>
    <name type="scientific">Salmonella typhimurium (strain LT2 / SGSC1412 / ATCC 700720)</name>
    <dbReference type="NCBI Taxonomy" id="99287"/>
    <lineage>
        <taxon>Bacteria</taxon>
        <taxon>Pseudomonadati</taxon>
        <taxon>Pseudomonadota</taxon>
        <taxon>Gammaproteobacteria</taxon>
        <taxon>Enterobacterales</taxon>
        <taxon>Enterobacteriaceae</taxon>
        <taxon>Salmonella</taxon>
    </lineage>
</organism>
<feature type="initiator methionine" description="Removed" evidence="1">
    <location>
        <position position="1"/>
    </location>
</feature>
<feature type="chain" id="PRO_0000068147" description="NAD(P)H-flavin reductase">
    <location>
        <begin position="2"/>
        <end position="233"/>
    </location>
</feature>
<feature type="domain" description="FAD-binding FR-type" evidence="3">
    <location>
        <begin position="2"/>
        <end position="119"/>
    </location>
</feature>
<feature type="binding site" evidence="1">
    <location>
        <begin position="111"/>
        <end position="115"/>
    </location>
    <ligand>
        <name>pyridine</name>
        <dbReference type="ChEBI" id="CHEBI:16227"/>
    </ligand>
</feature>